<protein>
    <recommendedName>
        <fullName evidence="1">Octanoyltransferase</fullName>
        <ecNumber evidence="1">2.3.1.181</ecNumber>
    </recommendedName>
    <alternativeName>
        <fullName evidence="1">Lipoate-protein ligase B</fullName>
    </alternativeName>
    <alternativeName>
        <fullName evidence="1">Lipoyl/octanoyl transferase</fullName>
    </alternativeName>
    <alternativeName>
        <fullName evidence="1">Octanoyl-[acyl-carrier-protein]-protein N-octanoyltransferase</fullName>
    </alternativeName>
</protein>
<evidence type="ECO:0000255" key="1">
    <source>
        <dbReference type="HAMAP-Rule" id="MF_00013"/>
    </source>
</evidence>
<evidence type="ECO:0000255" key="2">
    <source>
        <dbReference type="PROSITE-ProRule" id="PRU01067"/>
    </source>
</evidence>
<comment type="function">
    <text evidence="1">Catalyzes the transfer of endogenously produced octanoic acid from octanoyl-acyl-carrier-protein onto the lipoyl domains of lipoate-dependent enzymes. Lipoyl-ACP can also act as a substrate although octanoyl-ACP is likely to be the physiological substrate.</text>
</comment>
<comment type="catalytic activity">
    <reaction evidence="1">
        <text>octanoyl-[ACP] + L-lysyl-[protein] = N(6)-octanoyl-L-lysyl-[protein] + holo-[ACP] + H(+)</text>
        <dbReference type="Rhea" id="RHEA:17665"/>
        <dbReference type="Rhea" id="RHEA-COMP:9636"/>
        <dbReference type="Rhea" id="RHEA-COMP:9685"/>
        <dbReference type="Rhea" id="RHEA-COMP:9752"/>
        <dbReference type="Rhea" id="RHEA-COMP:9928"/>
        <dbReference type="ChEBI" id="CHEBI:15378"/>
        <dbReference type="ChEBI" id="CHEBI:29969"/>
        <dbReference type="ChEBI" id="CHEBI:64479"/>
        <dbReference type="ChEBI" id="CHEBI:78463"/>
        <dbReference type="ChEBI" id="CHEBI:78809"/>
        <dbReference type="EC" id="2.3.1.181"/>
    </reaction>
</comment>
<comment type="pathway">
    <text evidence="1">Protein modification; protein lipoylation via endogenous pathway; protein N(6)-(lipoyl)lysine from octanoyl-[acyl-carrier-protein]: step 1/2.</text>
</comment>
<comment type="subcellular location">
    <subcellularLocation>
        <location evidence="1">Cytoplasm</location>
    </subcellularLocation>
</comment>
<comment type="miscellaneous">
    <text evidence="1">In the reaction, the free carboxyl group of octanoic acid is attached via an amide linkage to the epsilon-amino group of a specific lysine residue of lipoyl domains of lipoate-dependent enzymes.</text>
</comment>
<comment type="similarity">
    <text evidence="1">Belongs to the LipB family.</text>
</comment>
<keyword id="KW-0012">Acyltransferase</keyword>
<keyword id="KW-0963">Cytoplasm</keyword>
<keyword id="KW-1185">Reference proteome</keyword>
<keyword id="KW-0808">Transferase</keyword>
<proteinExistence type="inferred from homology"/>
<dbReference type="EC" id="2.3.1.181" evidence="1"/>
<dbReference type="EMBL" id="CP000386">
    <property type="protein sequence ID" value="ABG05464.1"/>
    <property type="molecule type" value="Genomic_DNA"/>
</dbReference>
<dbReference type="RefSeq" id="WP_011565473.1">
    <property type="nucleotide sequence ID" value="NC_008148.1"/>
</dbReference>
<dbReference type="SMR" id="Q1AT14"/>
<dbReference type="STRING" id="266117.Rxyl_2547"/>
<dbReference type="KEGG" id="rxy:Rxyl_2547"/>
<dbReference type="eggNOG" id="COG0321">
    <property type="taxonomic scope" value="Bacteria"/>
</dbReference>
<dbReference type="HOGENOM" id="CLU_035168_1_3_11"/>
<dbReference type="OrthoDB" id="9787061at2"/>
<dbReference type="PhylomeDB" id="Q1AT14"/>
<dbReference type="UniPathway" id="UPA00538">
    <property type="reaction ID" value="UER00592"/>
</dbReference>
<dbReference type="Proteomes" id="UP000006637">
    <property type="component" value="Chromosome"/>
</dbReference>
<dbReference type="GO" id="GO:0005737">
    <property type="term" value="C:cytoplasm"/>
    <property type="evidence" value="ECO:0007669"/>
    <property type="project" value="UniProtKB-SubCell"/>
</dbReference>
<dbReference type="GO" id="GO:0033819">
    <property type="term" value="F:lipoyl(octanoyl) transferase activity"/>
    <property type="evidence" value="ECO:0007669"/>
    <property type="project" value="UniProtKB-EC"/>
</dbReference>
<dbReference type="GO" id="GO:0036211">
    <property type="term" value="P:protein modification process"/>
    <property type="evidence" value="ECO:0007669"/>
    <property type="project" value="InterPro"/>
</dbReference>
<dbReference type="CDD" id="cd16444">
    <property type="entry name" value="LipB"/>
    <property type="match status" value="1"/>
</dbReference>
<dbReference type="Gene3D" id="3.30.930.10">
    <property type="entry name" value="Bira Bifunctional Protein, Domain 2"/>
    <property type="match status" value="1"/>
</dbReference>
<dbReference type="HAMAP" id="MF_00013">
    <property type="entry name" value="LipB"/>
    <property type="match status" value="1"/>
</dbReference>
<dbReference type="InterPro" id="IPR045864">
    <property type="entry name" value="aa-tRNA-synth_II/BPL/LPL"/>
</dbReference>
<dbReference type="InterPro" id="IPR004143">
    <property type="entry name" value="BPL_LPL_catalytic"/>
</dbReference>
<dbReference type="InterPro" id="IPR000544">
    <property type="entry name" value="Octanoyltransferase"/>
</dbReference>
<dbReference type="InterPro" id="IPR020605">
    <property type="entry name" value="Octanoyltransferase_CS"/>
</dbReference>
<dbReference type="NCBIfam" id="TIGR00214">
    <property type="entry name" value="lipB"/>
    <property type="match status" value="1"/>
</dbReference>
<dbReference type="NCBIfam" id="NF010925">
    <property type="entry name" value="PRK14345.1"/>
    <property type="match status" value="1"/>
</dbReference>
<dbReference type="PANTHER" id="PTHR10993:SF7">
    <property type="entry name" value="LIPOYLTRANSFERASE 2, MITOCHONDRIAL-RELATED"/>
    <property type="match status" value="1"/>
</dbReference>
<dbReference type="PANTHER" id="PTHR10993">
    <property type="entry name" value="OCTANOYLTRANSFERASE"/>
    <property type="match status" value="1"/>
</dbReference>
<dbReference type="Pfam" id="PF21948">
    <property type="entry name" value="LplA-B_cat"/>
    <property type="match status" value="1"/>
</dbReference>
<dbReference type="PIRSF" id="PIRSF016262">
    <property type="entry name" value="LPLase"/>
    <property type="match status" value="1"/>
</dbReference>
<dbReference type="SUPFAM" id="SSF55681">
    <property type="entry name" value="Class II aaRS and biotin synthetases"/>
    <property type="match status" value="1"/>
</dbReference>
<dbReference type="PROSITE" id="PS51733">
    <property type="entry name" value="BPL_LPL_CATALYTIC"/>
    <property type="match status" value="1"/>
</dbReference>
<dbReference type="PROSITE" id="PS01313">
    <property type="entry name" value="LIPB"/>
    <property type="match status" value="1"/>
</dbReference>
<name>LIPB_RUBXD</name>
<gene>
    <name evidence="1" type="primary">lipB</name>
    <name type="ordered locus">Rxyl_2547</name>
</gene>
<sequence length="221" mass="24712">MELEERRAALDVRRLPGLTPYAEAWELQRELVRKRRSGEIPDTLLLLEHPPVYTVGRAARDASNLGAGEEYLRSLGAEVFWSDRGGDATFHGPGQLVGYPIIRLKVRDTHRYLRDLEEVVIRALAGYGLEGRRHPRYTGVWVNGSKICAIGVKFSSGWIASHGFALNVNTDLSWFDRITPCGIREYGVTSLERELGREIPLAGVEREIVSGFREVLGDPGS</sequence>
<accession>Q1AT14</accession>
<feature type="chain" id="PRO_0000321667" description="Octanoyltransferase">
    <location>
        <begin position="1"/>
        <end position="221"/>
    </location>
</feature>
<feature type="domain" description="BPL/LPL catalytic" evidence="2">
    <location>
        <begin position="38"/>
        <end position="220"/>
    </location>
</feature>
<feature type="active site" description="Acyl-thioester intermediate" evidence="1">
    <location>
        <position position="181"/>
    </location>
</feature>
<feature type="binding site" evidence="1">
    <location>
        <begin position="84"/>
        <end position="91"/>
    </location>
    <ligand>
        <name>substrate</name>
    </ligand>
</feature>
<feature type="binding site" evidence="1">
    <location>
        <begin position="149"/>
        <end position="151"/>
    </location>
    <ligand>
        <name>substrate</name>
    </ligand>
</feature>
<feature type="binding site" evidence="1">
    <location>
        <begin position="163"/>
        <end position="165"/>
    </location>
    <ligand>
        <name>substrate</name>
    </ligand>
</feature>
<feature type="site" description="Lowers pKa of active site Cys" evidence="1">
    <location>
        <position position="146"/>
    </location>
</feature>
<organism>
    <name type="scientific">Rubrobacter xylanophilus (strain DSM 9941 / JCM 11954 / NBRC 16129 / PRD-1)</name>
    <dbReference type="NCBI Taxonomy" id="266117"/>
    <lineage>
        <taxon>Bacteria</taxon>
        <taxon>Bacillati</taxon>
        <taxon>Actinomycetota</taxon>
        <taxon>Rubrobacteria</taxon>
        <taxon>Rubrobacterales</taxon>
        <taxon>Rubrobacteraceae</taxon>
        <taxon>Rubrobacter</taxon>
    </lineage>
</organism>
<reference key="1">
    <citation type="submission" date="2006-06" db="EMBL/GenBank/DDBJ databases">
        <title>Complete sequence of Rubrobacter xylanophilus DSM 9941.</title>
        <authorList>
            <consortium name="US DOE Joint Genome Institute"/>
            <person name="Copeland A."/>
            <person name="Lucas S."/>
            <person name="Lapidus A."/>
            <person name="Barry K."/>
            <person name="Detter J.C."/>
            <person name="Glavina del Rio T."/>
            <person name="Hammon N."/>
            <person name="Israni S."/>
            <person name="Dalin E."/>
            <person name="Tice H."/>
            <person name="Pitluck S."/>
            <person name="Munk A.C."/>
            <person name="Brettin T."/>
            <person name="Bruce D."/>
            <person name="Han C."/>
            <person name="Tapia R."/>
            <person name="Gilna P."/>
            <person name="Schmutz J."/>
            <person name="Larimer F."/>
            <person name="Land M."/>
            <person name="Hauser L."/>
            <person name="Kyrpides N."/>
            <person name="Lykidis A."/>
            <person name="da Costa M.S."/>
            <person name="Rainey F.A."/>
            <person name="Empadinhas N."/>
            <person name="Jolivet E."/>
            <person name="Battista J.R."/>
            <person name="Richardson P."/>
        </authorList>
    </citation>
    <scope>NUCLEOTIDE SEQUENCE [LARGE SCALE GENOMIC DNA]</scope>
    <source>
        <strain>DSM 9941 / JCM 11954 / NBRC 16129 / PRD-1</strain>
    </source>
</reference>